<dbReference type="EMBL" id="FO081330">
    <property type="protein sequence ID" value="CCD70827.1"/>
    <property type="molecule type" value="Genomic_DNA"/>
</dbReference>
<dbReference type="PIR" id="T31842">
    <property type="entry name" value="T31842"/>
</dbReference>
<dbReference type="RefSeq" id="NP_504153.1">
    <property type="nucleotide sequence ID" value="NM_071752.8"/>
</dbReference>
<dbReference type="SMR" id="O16425"/>
<dbReference type="FunCoup" id="O16425">
    <property type="interactions" value="310"/>
</dbReference>
<dbReference type="STRING" id="6239.T05B4.2.1"/>
<dbReference type="PaxDb" id="6239-T05B4.2"/>
<dbReference type="EnsemblMetazoa" id="T05B4.2.1">
    <property type="protein sequence ID" value="T05B4.2.1"/>
    <property type="gene ID" value="WBGene00003647"/>
</dbReference>
<dbReference type="GeneID" id="178813"/>
<dbReference type="KEGG" id="cel:CELE_T05B4.2"/>
<dbReference type="UCSC" id="T05B4.2">
    <property type="organism name" value="c. elegans"/>
</dbReference>
<dbReference type="AGR" id="WB:WBGene00003647"/>
<dbReference type="CTD" id="178813"/>
<dbReference type="WormBase" id="T05B4.2">
    <property type="protein sequence ID" value="CE13195"/>
    <property type="gene ID" value="WBGene00003647"/>
    <property type="gene designation" value="nhr-57"/>
</dbReference>
<dbReference type="eggNOG" id="KOG3575">
    <property type="taxonomic scope" value="Eukaryota"/>
</dbReference>
<dbReference type="HOGENOM" id="CLU_007368_1_1_1"/>
<dbReference type="InParanoid" id="O16425"/>
<dbReference type="OMA" id="KSCRYAK"/>
<dbReference type="OrthoDB" id="5797976at2759"/>
<dbReference type="PhylomeDB" id="O16425"/>
<dbReference type="PRO" id="PR:O16425"/>
<dbReference type="Proteomes" id="UP000001940">
    <property type="component" value="Chromosome V"/>
</dbReference>
<dbReference type="Bgee" id="WBGene00003647">
    <property type="expression patterns" value="Expressed in pharyngeal muscle cell (C elegans) and 3 other cell types or tissues"/>
</dbReference>
<dbReference type="GO" id="GO:0005634">
    <property type="term" value="C:nucleus"/>
    <property type="evidence" value="ECO:0000318"/>
    <property type="project" value="GO_Central"/>
</dbReference>
<dbReference type="GO" id="GO:0003700">
    <property type="term" value="F:DNA-binding transcription factor activity"/>
    <property type="evidence" value="ECO:0000318"/>
    <property type="project" value="GO_Central"/>
</dbReference>
<dbReference type="GO" id="GO:0000978">
    <property type="term" value="F:RNA polymerase II cis-regulatory region sequence-specific DNA binding"/>
    <property type="evidence" value="ECO:0007669"/>
    <property type="project" value="InterPro"/>
</dbReference>
<dbReference type="GO" id="GO:0008270">
    <property type="term" value="F:zinc ion binding"/>
    <property type="evidence" value="ECO:0007669"/>
    <property type="project" value="UniProtKB-KW"/>
</dbReference>
<dbReference type="GO" id="GO:0045087">
    <property type="term" value="P:innate immune response"/>
    <property type="evidence" value="ECO:0007007"/>
    <property type="project" value="WormBase"/>
</dbReference>
<dbReference type="GO" id="GO:0006357">
    <property type="term" value="P:regulation of transcription by RNA polymerase II"/>
    <property type="evidence" value="ECO:0000318"/>
    <property type="project" value="GO_Central"/>
</dbReference>
<dbReference type="GO" id="GO:0001666">
    <property type="term" value="P:response to hypoxia"/>
    <property type="evidence" value="ECO:0000315"/>
    <property type="project" value="WormBase"/>
</dbReference>
<dbReference type="CDD" id="cd06960">
    <property type="entry name" value="NR_DBD_HNF4A"/>
    <property type="match status" value="1"/>
</dbReference>
<dbReference type="FunFam" id="3.30.50.10:FF:000073">
    <property type="entry name" value="Nuclear hormone receptor family member nhr-121"/>
    <property type="match status" value="1"/>
</dbReference>
<dbReference type="Gene3D" id="3.30.50.10">
    <property type="entry name" value="Erythroid Transcription Factor GATA-1, subunit A"/>
    <property type="match status" value="1"/>
</dbReference>
<dbReference type="Gene3D" id="1.10.565.10">
    <property type="entry name" value="Retinoid X Receptor"/>
    <property type="match status" value="1"/>
</dbReference>
<dbReference type="InterPro" id="IPR049636">
    <property type="entry name" value="HNF4-like_DBD"/>
</dbReference>
<dbReference type="InterPro" id="IPR035500">
    <property type="entry name" value="NHR-like_dom_sf"/>
</dbReference>
<dbReference type="InterPro" id="IPR000536">
    <property type="entry name" value="Nucl_hrmn_rcpt_lig-bd"/>
</dbReference>
<dbReference type="InterPro" id="IPR001628">
    <property type="entry name" value="Znf_hrmn_rcpt"/>
</dbReference>
<dbReference type="InterPro" id="IPR013088">
    <property type="entry name" value="Znf_NHR/GATA"/>
</dbReference>
<dbReference type="PANTHER" id="PTHR46011:SF29">
    <property type="entry name" value="NUCLEAR HORMONE RECEPTOR FAMILY MEMBER NHR-57"/>
    <property type="match status" value="1"/>
</dbReference>
<dbReference type="PANTHER" id="PTHR46011">
    <property type="entry name" value="NUCLEAR HORMONE RECEPTOR FAMILY MEMBER NHR-86-RELATED"/>
    <property type="match status" value="1"/>
</dbReference>
<dbReference type="Pfam" id="PF00104">
    <property type="entry name" value="Hormone_recep"/>
    <property type="match status" value="1"/>
</dbReference>
<dbReference type="Pfam" id="PF00105">
    <property type="entry name" value="zf-C4"/>
    <property type="match status" value="1"/>
</dbReference>
<dbReference type="PRINTS" id="PR00047">
    <property type="entry name" value="STROIDFINGER"/>
</dbReference>
<dbReference type="SMART" id="SM00430">
    <property type="entry name" value="HOLI"/>
    <property type="match status" value="1"/>
</dbReference>
<dbReference type="SMART" id="SM00399">
    <property type="entry name" value="ZnF_C4"/>
    <property type="match status" value="1"/>
</dbReference>
<dbReference type="SUPFAM" id="SSF57716">
    <property type="entry name" value="Glucocorticoid receptor-like (DNA-binding domain)"/>
    <property type="match status" value="1"/>
</dbReference>
<dbReference type="SUPFAM" id="SSF48508">
    <property type="entry name" value="Nuclear receptor ligand-binding domain"/>
    <property type="match status" value="1"/>
</dbReference>
<dbReference type="PROSITE" id="PS51843">
    <property type="entry name" value="NR_LBD"/>
    <property type="match status" value="1"/>
</dbReference>
<dbReference type="PROSITE" id="PS00031">
    <property type="entry name" value="NUCLEAR_REC_DBD_1"/>
    <property type="match status" value="1"/>
</dbReference>
<dbReference type="PROSITE" id="PS51030">
    <property type="entry name" value="NUCLEAR_REC_DBD_2"/>
    <property type="match status" value="1"/>
</dbReference>
<reference key="1">
    <citation type="journal article" date="1998" name="Science">
        <title>Genome sequence of the nematode C. elegans: a platform for investigating biology.</title>
        <authorList>
            <consortium name="The C. elegans sequencing consortium"/>
        </authorList>
    </citation>
    <scope>NUCLEOTIDE SEQUENCE [LARGE SCALE GENOMIC DNA]</scope>
    <source>
        <strain>Bristol N2</strain>
    </source>
</reference>
<keyword id="KW-0238">DNA-binding</keyword>
<keyword id="KW-0479">Metal-binding</keyword>
<keyword id="KW-0539">Nucleus</keyword>
<keyword id="KW-0675">Receptor</keyword>
<keyword id="KW-1185">Reference proteome</keyword>
<keyword id="KW-0804">Transcription</keyword>
<keyword id="KW-0805">Transcription regulation</keyword>
<keyword id="KW-0862">Zinc</keyword>
<keyword id="KW-0863">Zinc-finger</keyword>
<accession>O16425</accession>
<evidence type="ECO:0000255" key="1">
    <source>
        <dbReference type="PROSITE-ProRule" id="PRU00407"/>
    </source>
</evidence>
<evidence type="ECO:0000255" key="2">
    <source>
        <dbReference type="PROSITE-ProRule" id="PRU01189"/>
    </source>
</evidence>
<evidence type="ECO:0000305" key="3"/>
<gene>
    <name type="primary">nhr-57</name>
    <name type="ORF">T05B4.2</name>
</gene>
<comment type="function">
    <text>Orphan nuclear receptor.</text>
</comment>
<comment type="subcellular location">
    <subcellularLocation>
        <location evidence="1">Nucleus</location>
    </subcellularLocation>
</comment>
<comment type="similarity">
    <text evidence="3">Belongs to the nuclear hormone receptor family.</text>
</comment>
<sequence length="374" mass="42932">MLVARERKYCSVCHQLGDGYHFGAIACKACAAFFRRTTSMNLAPKFVCRKKNECVIKMSSRDSCKSCRYAKCLHVGMNPEVVQAIQQAAKQANSPGIESLPSCSSSPASCNSPILSLELGDYDQMTPTLCGVMESYQKLYKKRYDLHAPKLTPRATNYGEFCKIYSNDVYLQFEFLEGSFPQFKEMGGFEKKHVFKYFFVSFLILEMGYRSYQEGTDAIVLANGDFIDTMNLDEFYYDPESLEKCKPTDAMKMYRPNFDQMKRNVFQPLSHQKLSLIEFLALVSLCTWNESLDGQPDCYYPSCRPVRQSVIADLKAFYEKDSPDVDPAYRLSGLLMLLPALERSVELFLQTMEVKRLFRCFPFHDKIYKIIDGQ</sequence>
<name>NHR57_CAEEL</name>
<feature type="chain" id="PRO_0000223578" description="Nuclear hormone receptor family member nhr-57">
    <location>
        <begin position="1"/>
        <end position="374"/>
    </location>
</feature>
<feature type="domain" description="NR LBD" evidence="2">
    <location>
        <begin position="124"/>
        <end position="374"/>
    </location>
</feature>
<feature type="DNA-binding region" description="Nuclear receptor" evidence="1">
    <location>
        <begin position="7"/>
        <end position="84"/>
    </location>
</feature>
<feature type="zinc finger region" description="NR C4-type" evidence="1">
    <location>
        <begin position="10"/>
        <end position="30"/>
    </location>
</feature>
<feature type="zinc finger region" description="NR C4-type" evidence="1">
    <location>
        <begin position="48"/>
        <end position="67"/>
    </location>
</feature>
<organism>
    <name type="scientific">Caenorhabditis elegans</name>
    <dbReference type="NCBI Taxonomy" id="6239"/>
    <lineage>
        <taxon>Eukaryota</taxon>
        <taxon>Metazoa</taxon>
        <taxon>Ecdysozoa</taxon>
        <taxon>Nematoda</taxon>
        <taxon>Chromadorea</taxon>
        <taxon>Rhabditida</taxon>
        <taxon>Rhabditina</taxon>
        <taxon>Rhabditomorpha</taxon>
        <taxon>Rhabditoidea</taxon>
        <taxon>Rhabditidae</taxon>
        <taxon>Peloderinae</taxon>
        <taxon>Caenorhabditis</taxon>
    </lineage>
</organism>
<protein>
    <recommendedName>
        <fullName>Nuclear hormone receptor family member nhr-57</fullName>
    </recommendedName>
</protein>
<proteinExistence type="inferred from homology"/>